<name>HIS7_BURL3</name>
<feature type="chain" id="PRO_1000010261" description="Imidazoleglycerol-phosphate dehydratase">
    <location>
        <begin position="1"/>
        <end position="195"/>
    </location>
</feature>
<sequence>MRVAEVVRNTSETQIRVKLNLDGTGQQKLATGVPFLDHMLDQIARHGLVDLEVEAHGDTHIDDHHTVEDVGITLGQAVAKAIGDRKGIRRYGHSYVPLDEALSRVVIDFSGRPGLEFHVPFTRARIGTFDVDLSIEFFRGFVNHAGVTLHIDNLRGINAHHQLETVFKAFGRALRAAVELDERAAGQIPSTKGSL</sequence>
<comment type="catalytic activity">
    <reaction evidence="1">
        <text>D-erythro-1-(imidazol-4-yl)glycerol 3-phosphate = 3-(imidazol-4-yl)-2-oxopropyl phosphate + H2O</text>
        <dbReference type="Rhea" id="RHEA:11040"/>
        <dbReference type="ChEBI" id="CHEBI:15377"/>
        <dbReference type="ChEBI" id="CHEBI:57766"/>
        <dbReference type="ChEBI" id="CHEBI:58278"/>
        <dbReference type="EC" id="4.2.1.19"/>
    </reaction>
</comment>
<comment type="pathway">
    <text evidence="1">Amino-acid biosynthesis; L-histidine biosynthesis; L-histidine from 5-phospho-alpha-D-ribose 1-diphosphate: step 6/9.</text>
</comment>
<comment type="subcellular location">
    <subcellularLocation>
        <location evidence="1">Cytoplasm</location>
    </subcellularLocation>
</comment>
<comment type="similarity">
    <text evidence="1">Belongs to the imidazoleglycerol-phosphate dehydratase family.</text>
</comment>
<accession>Q39K89</accession>
<proteinExistence type="inferred from homology"/>
<reference key="1">
    <citation type="submission" date="2005-10" db="EMBL/GenBank/DDBJ databases">
        <title>Complete sequence of chromosome 1 of Burkholderia sp. 383.</title>
        <authorList>
            <consortium name="US DOE Joint Genome Institute"/>
            <person name="Copeland A."/>
            <person name="Lucas S."/>
            <person name="Lapidus A."/>
            <person name="Barry K."/>
            <person name="Detter J.C."/>
            <person name="Glavina T."/>
            <person name="Hammon N."/>
            <person name="Israni S."/>
            <person name="Pitluck S."/>
            <person name="Chain P."/>
            <person name="Malfatti S."/>
            <person name="Shin M."/>
            <person name="Vergez L."/>
            <person name="Schmutz J."/>
            <person name="Larimer F."/>
            <person name="Land M."/>
            <person name="Kyrpides N."/>
            <person name="Lykidis A."/>
            <person name="Richardson P."/>
        </authorList>
    </citation>
    <scope>NUCLEOTIDE SEQUENCE [LARGE SCALE GENOMIC DNA]</scope>
    <source>
        <strain>ATCC 17760 / DSM 23089 / LMG 22485 / NCIMB 9086 / R18194 / 383</strain>
    </source>
</reference>
<protein>
    <recommendedName>
        <fullName evidence="1">Imidazoleglycerol-phosphate dehydratase</fullName>
        <shortName evidence="1">IGPD</shortName>
        <ecNumber evidence="1">4.2.1.19</ecNumber>
    </recommendedName>
</protein>
<organism>
    <name type="scientific">Burkholderia lata (strain ATCC 17760 / DSM 23089 / LMG 22485 / NCIMB 9086 / R18194 / 383)</name>
    <dbReference type="NCBI Taxonomy" id="482957"/>
    <lineage>
        <taxon>Bacteria</taxon>
        <taxon>Pseudomonadati</taxon>
        <taxon>Pseudomonadota</taxon>
        <taxon>Betaproteobacteria</taxon>
        <taxon>Burkholderiales</taxon>
        <taxon>Burkholderiaceae</taxon>
        <taxon>Burkholderia</taxon>
        <taxon>Burkholderia cepacia complex</taxon>
    </lineage>
</organism>
<dbReference type="EC" id="4.2.1.19" evidence="1"/>
<dbReference type="EMBL" id="CP000151">
    <property type="protein sequence ID" value="ABB07127.1"/>
    <property type="molecule type" value="Genomic_DNA"/>
</dbReference>
<dbReference type="RefSeq" id="WP_011350728.1">
    <property type="nucleotide sequence ID" value="NZ_WNDV01000034.1"/>
</dbReference>
<dbReference type="SMR" id="Q39K89"/>
<dbReference type="GeneID" id="93146269"/>
<dbReference type="KEGG" id="bur:Bcep18194_A3525"/>
<dbReference type="HOGENOM" id="CLU_044308_2_0_4"/>
<dbReference type="UniPathway" id="UPA00031">
    <property type="reaction ID" value="UER00011"/>
</dbReference>
<dbReference type="Proteomes" id="UP000002705">
    <property type="component" value="Chromosome 1"/>
</dbReference>
<dbReference type="GO" id="GO:0005737">
    <property type="term" value="C:cytoplasm"/>
    <property type="evidence" value="ECO:0007669"/>
    <property type="project" value="UniProtKB-SubCell"/>
</dbReference>
<dbReference type="GO" id="GO:0004424">
    <property type="term" value="F:imidazoleglycerol-phosphate dehydratase activity"/>
    <property type="evidence" value="ECO:0007669"/>
    <property type="project" value="UniProtKB-UniRule"/>
</dbReference>
<dbReference type="GO" id="GO:0000105">
    <property type="term" value="P:L-histidine biosynthetic process"/>
    <property type="evidence" value="ECO:0007669"/>
    <property type="project" value="UniProtKB-UniRule"/>
</dbReference>
<dbReference type="CDD" id="cd07914">
    <property type="entry name" value="IGPD"/>
    <property type="match status" value="1"/>
</dbReference>
<dbReference type="FunFam" id="3.30.230.40:FF:000002">
    <property type="entry name" value="Imidazoleglycerol-phosphate dehydratase"/>
    <property type="match status" value="1"/>
</dbReference>
<dbReference type="FunFam" id="3.30.230.40:FF:000003">
    <property type="entry name" value="Imidazoleglycerol-phosphate dehydratase HisB"/>
    <property type="match status" value="1"/>
</dbReference>
<dbReference type="Gene3D" id="3.30.230.40">
    <property type="entry name" value="Imidazole glycerol phosphate dehydratase, domain 1"/>
    <property type="match status" value="2"/>
</dbReference>
<dbReference type="HAMAP" id="MF_00076">
    <property type="entry name" value="HisB"/>
    <property type="match status" value="1"/>
</dbReference>
<dbReference type="InterPro" id="IPR038494">
    <property type="entry name" value="IGPD_sf"/>
</dbReference>
<dbReference type="InterPro" id="IPR000807">
    <property type="entry name" value="ImidazoleglycerolP_deHydtase"/>
</dbReference>
<dbReference type="InterPro" id="IPR020565">
    <property type="entry name" value="ImidazoleglycerP_deHydtase_CS"/>
</dbReference>
<dbReference type="InterPro" id="IPR020568">
    <property type="entry name" value="Ribosomal_Su5_D2-typ_SF"/>
</dbReference>
<dbReference type="NCBIfam" id="NF002106">
    <property type="entry name" value="PRK00951.1-1"/>
    <property type="match status" value="1"/>
</dbReference>
<dbReference type="NCBIfam" id="NF002109">
    <property type="entry name" value="PRK00951.1-5"/>
    <property type="match status" value="1"/>
</dbReference>
<dbReference type="NCBIfam" id="NF002111">
    <property type="entry name" value="PRK00951.2-1"/>
    <property type="match status" value="1"/>
</dbReference>
<dbReference type="NCBIfam" id="NF002114">
    <property type="entry name" value="PRK00951.2-4"/>
    <property type="match status" value="1"/>
</dbReference>
<dbReference type="PANTHER" id="PTHR23133:SF2">
    <property type="entry name" value="IMIDAZOLEGLYCEROL-PHOSPHATE DEHYDRATASE"/>
    <property type="match status" value="1"/>
</dbReference>
<dbReference type="PANTHER" id="PTHR23133">
    <property type="entry name" value="IMIDAZOLEGLYCEROL-PHOSPHATE DEHYDRATASE HIS7"/>
    <property type="match status" value="1"/>
</dbReference>
<dbReference type="Pfam" id="PF00475">
    <property type="entry name" value="IGPD"/>
    <property type="match status" value="1"/>
</dbReference>
<dbReference type="SUPFAM" id="SSF54211">
    <property type="entry name" value="Ribosomal protein S5 domain 2-like"/>
    <property type="match status" value="2"/>
</dbReference>
<dbReference type="PROSITE" id="PS00954">
    <property type="entry name" value="IGP_DEHYDRATASE_1"/>
    <property type="match status" value="1"/>
</dbReference>
<dbReference type="PROSITE" id="PS00955">
    <property type="entry name" value="IGP_DEHYDRATASE_2"/>
    <property type="match status" value="1"/>
</dbReference>
<evidence type="ECO:0000255" key="1">
    <source>
        <dbReference type="HAMAP-Rule" id="MF_00076"/>
    </source>
</evidence>
<keyword id="KW-0028">Amino-acid biosynthesis</keyword>
<keyword id="KW-0963">Cytoplasm</keyword>
<keyword id="KW-0368">Histidine biosynthesis</keyword>
<keyword id="KW-0456">Lyase</keyword>
<gene>
    <name evidence="1" type="primary">hisB</name>
    <name type="ordered locus">Bcep18194_A3525</name>
</gene>